<comment type="subcellular location">
    <subcellularLocation>
        <location evidence="2">Membrane</location>
        <topology evidence="2">Single-pass membrane protein</topology>
    </subcellularLocation>
</comment>
<protein>
    <recommendedName>
        <fullName>Uncharacterized protein YojB</fullName>
    </recommendedName>
</protein>
<accession>O31861</accession>
<organism>
    <name type="scientific">Bacillus subtilis (strain 168)</name>
    <dbReference type="NCBI Taxonomy" id="224308"/>
    <lineage>
        <taxon>Bacteria</taxon>
        <taxon>Bacillati</taxon>
        <taxon>Bacillota</taxon>
        <taxon>Bacilli</taxon>
        <taxon>Bacillales</taxon>
        <taxon>Bacillaceae</taxon>
        <taxon>Bacillus</taxon>
    </lineage>
</organism>
<gene>
    <name type="primary">yojB</name>
    <name type="ordered locus">BSU19510</name>
</gene>
<evidence type="ECO:0000255" key="1"/>
<evidence type="ECO:0000305" key="2"/>
<name>YOJB_BACSU</name>
<dbReference type="EMBL" id="AF026147">
    <property type="protein sequence ID" value="AAC17850.1"/>
    <property type="molecule type" value="Genomic_DNA"/>
</dbReference>
<dbReference type="EMBL" id="AL009126">
    <property type="protein sequence ID" value="CAB13842.1"/>
    <property type="molecule type" value="Genomic_DNA"/>
</dbReference>
<dbReference type="PIR" id="H69905">
    <property type="entry name" value="H69905"/>
</dbReference>
<dbReference type="RefSeq" id="NP_389832.1">
    <property type="nucleotide sequence ID" value="NC_000964.3"/>
</dbReference>
<dbReference type="RefSeq" id="WP_004399366.1">
    <property type="nucleotide sequence ID" value="NZ_OZ025638.1"/>
</dbReference>
<dbReference type="FunCoup" id="O31861">
    <property type="interactions" value="8"/>
</dbReference>
<dbReference type="IntAct" id="O31861">
    <property type="interactions" value="3"/>
</dbReference>
<dbReference type="STRING" id="224308.BSU19510"/>
<dbReference type="PaxDb" id="224308-BSU19510"/>
<dbReference type="EnsemblBacteria" id="CAB13842">
    <property type="protein sequence ID" value="CAB13842"/>
    <property type="gene ID" value="BSU_19510"/>
</dbReference>
<dbReference type="GeneID" id="939446"/>
<dbReference type="KEGG" id="bsu:BSU19510"/>
<dbReference type="PATRIC" id="fig|224308.179.peg.2133"/>
<dbReference type="InParanoid" id="O31861"/>
<dbReference type="BioCyc" id="BSUB:BSU19510-MONOMER"/>
<dbReference type="Proteomes" id="UP000001570">
    <property type="component" value="Chromosome"/>
</dbReference>
<dbReference type="GO" id="GO:0016020">
    <property type="term" value="C:membrane"/>
    <property type="evidence" value="ECO:0007669"/>
    <property type="project" value="UniProtKB-SubCell"/>
</dbReference>
<feature type="chain" id="PRO_0000049660" description="Uncharacterized protein YojB">
    <location>
        <begin position="1"/>
        <end position="78"/>
    </location>
</feature>
<feature type="transmembrane region" description="Helical" evidence="1">
    <location>
        <begin position="21"/>
        <end position="43"/>
    </location>
</feature>
<reference key="1">
    <citation type="journal article" date="1998" name="DNA Res.">
        <title>Sequence analysis of the Bacillus subtilis 168 chromosome region between the sspC and odhA loci (184 degrees-180 degrees).</title>
        <authorList>
            <person name="Ghim S.-Y."/>
            <person name="Choi S.-K."/>
            <person name="Shin B.-S."/>
            <person name="Jeong Y.-M."/>
            <person name="Sorokin A."/>
            <person name="Ehrlich S.D."/>
            <person name="Park S.-H."/>
        </authorList>
    </citation>
    <scope>NUCLEOTIDE SEQUENCE [GENOMIC DNA]</scope>
    <source>
        <strain>168</strain>
    </source>
</reference>
<reference key="2">
    <citation type="journal article" date="1997" name="Nature">
        <title>The complete genome sequence of the Gram-positive bacterium Bacillus subtilis.</title>
        <authorList>
            <person name="Kunst F."/>
            <person name="Ogasawara N."/>
            <person name="Moszer I."/>
            <person name="Albertini A.M."/>
            <person name="Alloni G."/>
            <person name="Azevedo V."/>
            <person name="Bertero M.G."/>
            <person name="Bessieres P."/>
            <person name="Bolotin A."/>
            <person name="Borchert S."/>
            <person name="Borriss R."/>
            <person name="Boursier L."/>
            <person name="Brans A."/>
            <person name="Braun M."/>
            <person name="Brignell S.C."/>
            <person name="Bron S."/>
            <person name="Brouillet S."/>
            <person name="Bruschi C.V."/>
            <person name="Caldwell B."/>
            <person name="Capuano V."/>
            <person name="Carter N.M."/>
            <person name="Choi S.-K."/>
            <person name="Codani J.-J."/>
            <person name="Connerton I.F."/>
            <person name="Cummings N.J."/>
            <person name="Daniel R.A."/>
            <person name="Denizot F."/>
            <person name="Devine K.M."/>
            <person name="Duesterhoeft A."/>
            <person name="Ehrlich S.D."/>
            <person name="Emmerson P.T."/>
            <person name="Entian K.-D."/>
            <person name="Errington J."/>
            <person name="Fabret C."/>
            <person name="Ferrari E."/>
            <person name="Foulger D."/>
            <person name="Fritz C."/>
            <person name="Fujita M."/>
            <person name="Fujita Y."/>
            <person name="Fuma S."/>
            <person name="Galizzi A."/>
            <person name="Galleron N."/>
            <person name="Ghim S.-Y."/>
            <person name="Glaser P."/>
            <person name="Goffeau A."/>
            <person name="Golightly E.J."/>
            <person name="Grandi G."/>
            <person name="Guiseppi G."/>
            <person name="Guy B.J."/>
            <person name="Haga K."/>
            <person name="Haiech J."/>
            <person name="Harwood C.R."/>
            <person name="Henaut A."/>
            <person name="Hilbert H."/>
            <person name="Holsappel S."/>
            <person name="Hosono S."/>
            <person name="Hullo M.-F."/>
            <person name="Itaya M."/>
            <person name="Jones L.-M."/>
            <person name="Joris B."/>
            <person name="Karamata D."/>
            <person name="Kasahara Y."/>
            <person name="Klaerr-Blanchard M."/>
            <person name="Klein C."/>
            <person name="Kobayashi Y."/>
            <person name="Koetter P."/>
            <person name="Koningstein G."/>
            <person name="Krogh S."/>
            <person name="Kumano M."/>
            <person name="Kurita K."/>
            <person name="Lapidus A."/>
            <person name="Lardinois S."/>
            <person name="Lauber J."/>
            <person name="Lazarevic V."/>
            <person name="Lee S.-M."/>
            <person name="Levine A."/>
            <person name="Liu H."/>
            <person name="Masuda S."/>
            <person name="Mauel C."/>
            <person name="Medigue C."/>
            <person name="Medina N."/>
            <person name="Mellado R.P."/>
            <person name="Mizuno M."/>
            <person name="Moestl D."/>
            <person name="Nakai S."/>
            <person name="Noback M."/>
            <person name="Noone D."/>
            <person name="O'Reilly M."/>
            <person name="Ogawa K."/>
            <person name="Ogiwara A."/>
            <person name="Oudega B."/>
            <person name="Park S.-H."/>
            <person name="Parro V."/>
            <person name="Pohl T.M."/>
            <person name="Portetelle D."/>
            <person name="Porwollik S."/>
            <person name="Prescott A.M."/>
            <person name="Presecan E."/>
            <person name="Pujic P."/>
            <person name="Purnelle B."/>
            <person name="Rapoport G."/>
            <person name="Rey M."/>
            <person name="Reynolds S."/>
            <person name="Rieger M."/>
            <person name="Rivolta C."/>
            <person name="Rocha E."/>
            <person name="Roche B."/>
            <person name="Rose M."/>
            <person name="Sadaie Y."/>
            <person name="Sato T."/>
            <person name="Scanlan E."/>
            <person name="Schleich S."/>
            <person name="Schroeter R."/>
            <person name="Scoffone F."/>
            <person name="Sekiguchi J."/>
            <person name="Sekowska A."/>
            <person name="Seror S.J."/>
            <person name="Serror P."/>
            <person name="Shin B.-S."/>
            <person name="Soldo B."/>
            <person name="Sorokin A."/>
            <person name="Tacconi E."/>
            <person name="Takagi T."/>
            <person name="Takahashi H."/>
            <person name="Takemaru K."/>
            <person name="Takeuchi M."/>
            <person name="Tamakoshi A."/>
            <person name="Tanaka T."/>
            <person name="Terpstra P."/>
            <person name="Tognoni A."/>
            <person name="Tosato V."/>
            <person name="Uchiyama S."/>
            <person name="Vandenbol M."/>
            <person name="Vannier F."/>
            <person name="Vassarotti A."/>
            <person name="Viari A."/>
            <person name="Wambutt R."/>
            <person name="Wedler E."/>
            <person name="Wedler H."/>
            <person name="Weitzenegger T."/>
            <person name="Winters P."/>
            <person name="Wipat A."/>
            <person name="Yamamoto H."/>
            <person name="Yamane K."/>
            <person name="Yasumoto K."/>
            <person name="Yata K."/>
            <person name="Yoshida K."/>
            <person name="Yoshikawa H.-F."/>
            <person name="Zumstein E."/>
            <person name="Yoshikawa H."/>
            <person name="Danchin A."/>
        </authorList>
    </citation>
    <scope>NUCLEOTIDE SEQUENCE [LARGE SCALE GENOMIC DNA]</scope>
    <source>
        <strain>168</strain>
    </source>
</reference>
<sequence>MYPHHSYLRGIPGPAGYPARSPFLFGAPLVGGLLGGFLGSALFNYSRPYAYPPGPYGYGGGPYGFGAGVPYGGYPGFY</sequence>
<keyword id="KW-0472">Membrane</keyword>
<keyword id="KW-1185">Reference proteome</keyword>
<keyword id="KW-0812">Transmembrane</keyword>
<keyword id="KW-1133">Transmembrane helix</keyword>
<proteinExistence type="predicted"/>